<name>PRM9_YEAST</name>
<sequence length="298" mass="35073">MSPQYHFYFVSFRNLVLNEKCLRSKKQVMKSFNWYKTDRYFDPHNILQHHSRAIEKTRYKLGMQTSSESTDAKSDFLDEPSAYLIEKNVALPKDIFGSYLSYWIYEVTRHKAAVILLVLIVTSILLLVFFYNTEFCVAFEILLFSFCFPGTCMVVIAFSEPIGDREFKVKLLMEIITRKPAVKGKEWRTITYKMNQYLFDHGLWDTPYYFYRDEDCHRYFLSLIKGRTFKKQKESSASNVKDAQSNDETAGTPNEAAESSSFSAGPNFIKLLTKAAEIEQQFQKEYWRQEYPGVDEFF</sequence>
<feature type="chain" id="PRO_0000207524" description="Pheromone-regulated membrane protein 9">
    <location>
        <begin position="1"/>
        <end position="298"/>
    </location>
</feature>
<feature type="topological domain" description="Cytoplasmic" evidence="2">
    <location>
        <begin position="1"/>
        <end position="111"/>
    </location>
</feature>
<feature type="transmembrane region" description="Helical" evidence="2">
    <location>
        <begin position="112"/>
        <end position="132"/>
    </location>
</feature>
<feature type="topological domain" description="Extracellular" evidence="2">
    <location>
        <begin position="133"/>
        <end position="137"/>
    </location>
</feature>
<feature type="transmembrane region" description="Helical" evidence="2">
    <location>
        <begin position="138"/>
        <end position="158"/>
    </location>
</feature>
<feature type="topological domain" description="Cytoplasmic" evidence="2">
    <location>
        <begin position="159"/>
        <end position="298"/>
    </location>
</feature>
<feature type="region of interest" description="Disordered" evidence="3">
    <location>
        <begin position="235"/>
        <end position="262"/>
    </location>
</feature>
<feature type="region of interest" description="COPII binding" evidence="1">
    <location>
        <begin position="297"/>
        <end position="298"/>
    </location>
</feature>
<dbReference type="EMBL" id="L28920">
    <property type="protein sequence ID" value="AAC09493.1"/>
    <property type="molecule type" value="Genomic_DNA"/>
</dbReference>
<dbReference type="EMBL" id="BK006935">
    <property type="protein sequence ID" value="DAA07002.1"/>
    <property type="molecule type" value="Genomic_DNA"/>
</dbReference>
<dbReference type="PIR" id="S53483">
    <property type="entry name" value="S53483"/>
</dbReference>
<dbReference type="RefSeq" id="NP_009418.1">
    <property type="nucleotide sequence ID" value="NM_001178224.1"/>
</dbReference>
<dbReference type="BioGRID" id="31809">
    <property type="interactions" value="79"/>
</dbReference>
<dbReference type="DIP" id="DIP-1757N"/>
<dbReference type="FunCoup" id="P39551">
    <property type="interactions" value="48"/>
</dbReference>
<dbReference type="IntAct" id="P39551">
    <property type="interactions" value="4"/>
</dbReference>
<dbReference type="MINT" id="P39551"/>
<dbReference type="STRING" id="4932.YAR031W"/>
<dbReference type="PaxDb" id="4932-YAR031W"/>
<dbReference type="PeptideAtlas" id="P39551"/>
<dbReference type="EnsemblFungi" id="YAR031W_mRNA">
    <property type="protein sequence ID" value="YAR031W"/>
    <property type="gene ID" value="YAR031W"/>
</dbReference>
<dbReference type="GeneID" id="851282"/>
<dbReference type="KEGG" id="sce:YAR031W"/>
<dbReference type="AGR" id="SGD:S000000078"/>
<dbReference type="SGD" id="S000000078">
    <property type="gene designation" value="PRM9"/>
</dbReference>
<dbReference type="VEuPathDB" id="FungiDB:YAR031W"/>
<dbReference type="eggNOG" id="ENOG502SSNW">
    <property type="taxonomic scope" value="Eukaryota"/>
</dbReference>
<dbReference type="GeneTree" id="ENSGT00940000176285"/>
<dbReference type="HOGENOM" id="CLU_081384_0_0_1"/>
<dbReference type="InParanoid" id="P39551"/>
<dbReference type="OMA" id="NTEFCVA"/>
<dbReference type="OrthoDB" id="4054881at2759"/>
<dbReference type="BioCyc" id="YEAST:G3O-28881-MONOMER"/>
<dbReference type="BioGRID-ORCS" id="851282">
    <property type="hits" value="0 hits in 10 CRISPR screens"/>
</dbReference>
<dbReference type="PRO" id="PR:P39551"/>
<dbReference type="Proteomes" id="UP000002311">
    <property type="component" value="Chromosome I"/>
</dbReference>
<dbReference type="RNAct" id="P39551">
    <property type="molecule type" value="protein"/>
</dbReference>
<dbReference type="GO" id="GO:0005783">
    <property type="term" value="C:endoplasmic reticulum"/>
    <property type="evidence" value="ECO:0000353"/>
    <property type="project" value="SGD"/>
</dbReference>
<dbReference type="GO" id="GO:0005886">
    <property type="term" value="C:plasma membrane"/>
    <property type="evidence" value="ECO:0000314"/>
    <property type="project" value="SGD"/>
</dbReference>
<dbReference type="GO" id="GO:0016192">
    <property type="term" value="P:vesicle-mediated transport"/>
    <property type="evidence" value="ECO:0007669"/>
    <property type="project" value="UniProtKB-KW"/>
</dbReference>
<dbReference type="InterPro" id="IPR001142">
    <property type="entry name" value="DUP/COS"/>
</dbReference>
<dbReference type="Pfam" id="PF00674">
    <property type="entry name" value="DUP"/>
    <property type="match status" value="1"/>
</dbReference>
<proteinExistence type="evidence at protein level"/>
<comment type="function">
    <text>May be involved in endoplasmic reticulum exit trafficking of proteins.</text>
</comment>
<comment type="subunit">
    <text evidence="1">Interacts with PRM8. Binds to COPII coated vesicles (By similarity).</text>
</comment>
<comment type="subcellular location">
    <subcellularLocation>
        <location evidence="4">Cell membrane</location>
        <topology evidence="4">Multi-pass membrane protein</topology>
    </subcellularLocation>
</comment>
<comment type="miscellaneous">
    <text evidence="5">Present with 259 molecules/cell in log phase SD medium.</text>
</comment>
<comment type="miscellaneous">
    <text>Members of the DUP240 multigene family are specific to S.cerevisiae sensu strictu. Cells lacking all 10 DUP240 proteins show no obvious alterations in mating, sporulation and cell growth.</text>
</comment>
<comment type="similarity">
    <text evidence="6">Belongs to the DUP/COS family.</text>
</comment>
<gene>
    <name type="primary">PRM9</name>
    <name type="ordered locus">YAR031W</name>
    <name type="ORF">FUN58</name>
</gene>
<protein>
    <recommendedName>
        <fullName>Pheromone-regulated membrane protein 9</fullName>
    </recommendedName>
    <alternativeName>
        <fullName>DUP240 protein PRM9</fullName>
    </alternativeName>
</protein>
<keyword id="KW-1003">Cell membrane</keyword>
<keyword id="KW-0931">ER-Golgi transport</keyword>
<keyword id="KW-0472">Membrane</keyword>
<keyword id="KW-1185">Reference proteome</keyword>
<keyword id="KW-0812">Transmembrane</keyword>
<keyword id="KW-1133">Transmembrane helix</keyword>
<keyword id="KW-0813">Transport</keyword>
<accession>P39551</accession>
<accession>D6VPN2</accession>
<evidence type="ECO:0000250" key="1"/>
<evidence type="ECO:0000255" key="2"/>
<evidence type="ECO:0000256" key="3">
    <source>
        <dbReference type="SAM" id="MobiDB-lite"/>
    </source>
</evidence>
<evidence type="ECO:0000269" key="4">
    <source>
    </source>
</evidence>
<evidence type="ECO:0000269" key="5">
    <source>
    </source>
</evidence>
<evidence type="ECO:0000305" key="6"/>
<reference key="1">
    <citation type="submission" date="1994-02" db="EMBL/GenBank/DDBJ databases">
        <title>Sequencing of chromosome I of Saccharomyces cerevisiae: analysis of the 52 Kbp CDC15-FLO1-PHO11-YAR074 region.</title>
        <authorList>
            <person name="Bussey H."/>
            <person name="Keng T."/>
            <person name="Storms R.K."/>
            <person name="Vo D."/>
            <person name="Zhong W."/>
            <person name="Fortin N."/>
            <person name="Barton A.B."/>
            <person name="Kaback D.B."/>
            <person name="Clark M.W."/>
        </authorList>
    </citation>
    <scope>NUCLEOTIDE SEQUENCE [GENOMIC DNA]</scope>
    <source>
        <strain>ATCC 204511 / S288c / AB972</strain>
    </source>
</reference>
<reference key="2">
    <citation type="journal article" date="1995" name="Proc. Natl. Acad. Sci. U.S.A.">
        <title>The nucleotide sequence of chromosome I from Saccharomyces cerevisiae.</title>
        <authorList>
            <person name="Bussey H."/>
            <person name="Kaback D.B."/>
            <person name="Zhong W.-W."/>
            <person name="Vo D.H."/>
            <person name="Clark M.W."/>
            <person name="Fortin N."/>
            <person name="Hall J."/>
            <person name="Ouellette B.F.F."/>
            <person name="Keng T."/>
            <person name="Barton A.B."/>
            <person name="Su Y."/>
            <person name="Davies C.J."/>
            <person name="Storms R.K."/>
        </authorList>
    </citation>
    <scope>NUCLEOTIDE SEQUENCE [LARGE SCALE GENOMIC DNA]</scope>
    <source>
        <strain>ATCC 204508 / S288c</strain>
    </source>
</reference>
<reference key="3">
    <citation type="journal article" date="2014" name="G3 (Bethesda)">
        <title>The reference genome sequence of Saccharomyces cerevisiae: Then and now.</title>
        <authorList>
            <person name="Engel S.R."/>
            <person name="Dietrich F.S."/>
            <person name="Fisk D.G."/>
            <person name="Binkley G."/>
            <person name="Balakrishnan R."/>
            <person name="Costanzo M.C."/>
            <person name="Dwight S.S."/>
            <person name="Hitz B.C."/>
            <person name="Karra K."/>
            <person name="Nash R.S."/>
            <person name="Weng S."/>
            <person name="Wong E.D."/>
            <person name="Lloyd P."/>
            <person name="Skrzypek M.S."/>
            <person name="Miyasato S.R."/>
            <person name="Simison M."/>
            <person name="Cherry J.M."/>
        </authorList>
    </citation>
    <scope>GENOME REANNOTATION</scope>
    <source>
        <strain>ATCC 204508 / S288c</strain>
    </source>
</reference>
<reference key="4">
    <citation type="journal article" date="2000" name="J. Cell Biol.">
        <title>Prm1p, a pheromone-regulated multispanning membrane protein, facilitates plasma membrane fusion during yeast mating.</title>
        <authorList>
            <person name="Heiman M.G."/>
            <person name="Walter P."/>
        </authorList>
    </citation>
    <scope>NOMENCLATURE</scope>
</reference>
<reference key="5">
    <citation type="journal article" date="2002" name="Microbiology">
        <title>Functional analysis of the Saccharomyces cerevisiae DUP240 multigene family reveals membrane-associated proteins that are not essential for cell viability.</title>
        <authorList>
            <person name="Poirey R."/>
            <person name="Despons L."/>
            <person name="Leh V."/>
            <person name="Lafuente M.-J."/>
            <person name="Potier S."/>
            <person name="Souciet J.-L."/>
            <person name="Jauniaux J.-C."/>
        </authorList>
    </citation>
    <scope>SUBCELLULAR LOCATION</scope>
</reference>
<reference key="6">
    <citation type="journal article" date="2003" name="Mol. Biol. Cell">
        <title>Suppression of coatomer mutants by a new protein family with COPI and COPII binding motifs in Saccharomyces cerevisiae.</title>
        <authorList>
            <person name="Sandmann T."/>
            <person name="Herrmann J.M."/>
            <person name="Dengjel J."/>
            <person name="Schwarz H."/>
            <person name="Spang A."/>
        </authorList>
    </citation>
    <scope>INTERACTION WITH PRM8</scope>
</reference>
<reference key="7">
    <citation type="journal article" date="2003" name="Nature">
        <title>Global analysis of protein expression in yeast.</title>
        <authorList>
            <person name="Ghaemmaghami S."/>
            <person name="Huh W.-K."/>
            <person name="Bower K."/>
            <person name="Howson R.W."/>
            <person name="Belle A."/>
            <person name="Dephoure N."/>
            <person name="O'Shea E.K."/>
            <person name="Weissman J.S."/>
        </authorList>
    </citation>
    <scope>LEVEL OF PROTEIN EXPRESSION [LARGE SCALE ANALYSIS]</scope>
</reference>
<reference key="8">
    <citation type="journal article" date="2006" name="Proc. Natl. Acad. Sci. U.S.A.">
        <title>A global topology map of the Saccharomyces cerevisiae membrane proteome.</title>
        <authorList>
            <person name="Kim H."/>
            <person name="Melen K."/>
            <person name="Oesterberg M."/>
            <person name="von Heijne G."/>
        </authorList>
    </citation>
    <scope>TOPOLOGY [LARGE SCALE ANALYSIS]</scope>
    <source>
        <strain>ATCC 208353 / W303-1A</strain>
    </source>
</reference>
<organism>
    <name type="scientific">Saccharomyces cerevisiae (strain ATCC 204508 / S288c)</name>
    <name type="common">Baker's yeast</name>
    <dbReference type="NCBI Taxonomy" id="559292"/>
    <lineage>
        <taxon>Eukaryota</taxon>
        <taxon>Fungi</taxon>
        <taxon>Dikarya</taxon>
        <taxon>Ascomycota</taxon>
        <taxon>Saccharomycotina</taxon>
        <taxon>Saccharomycetes</taxon>
        <taxon>Saccharomycetales</taxon>
        <taxon>Saccharomycetaceae</taxon>
        <taxon>Saccharomyces</taxon>
    </lineage>
</organism>